<feature type="chain" id="PRO_1000016728" description="Holliday junction resolvase RecU">
    <location>
        <begin position="1"/>
        <end position="210"/>
    </location>
</feature>
<feature type="binding site" evidence="1">
    <location>
        <position position="87"/>
    </location>
    <ligand>
        <name>Mg(2+)</name>
        <dbReference type="ChEBI" id="CHEBI:18420"/>
    </ligand>
</feature>
<feature type="binding site" evidence="1">
    <location>
        <position position="89"/>
    </location>
    <ligand>
        <name>Mg(2+)</name>
        <dbReference type="ChEBI" id="CHEBI:18420"/>
    </ligand>
</feature>
<feature type="binding site" evidence="1">
    <location>
        <position position="102"/>
    </location>
    <ligand>
        <name>Mg(2+)</name>
        <dbReference type="ChEBI" id="CHEBI:18420"/>
    </ligand>
</feature>
<feature type="binding site" evidence="1">
    <location>
        <position position="121"/>
    </location>
    <ligand>
        <name>Mg(2+)</name>
        <dbReference type="ChEBI" id="CHEBI:18420"/>
    </ligand>
</feature>
<feature type="site" description="Transition state stabilizer" evidence="1">
    <location>
        <position position="104"/>
    </location>
</feature>
<name>RECU_LACDA</name>
<dbReference type="EC" id="3.1.21.10" evidence="1"/>
<dbReference type="EMBL" id="CR954253">
    <property type="protein sequence ID" value="CAI97815.1"/>
    <property type="molecule type" value="Genomic_DNA"/>
</dbReference>
<dbReference type="RefSeq" id="WP_011543875.1">
    <property type="nucleotide sequence ID" value="NZ_JQAV01000013.1"/>
</dbReference>
<dbReference type="SMR" id="Q1GA99"/>
<dbReference type="STRING" id="390333.Ldb1013"/>
<dbReference type="KEGG" id="ldb:Ldb1013"/>
<dbReference type="eggNOG" id="COG3331">
    <property type="taxonomic scope" value="Bacteria"/>
</dbReference>
<dbReference type="HOGENOM" id="CLU_096340_0_0_9"/>
<dbReference type="BioCyc" id="LDEL390333:LDB_RS04440-MONOMER"/>
<dbReference type="Proteomes" id="UP000001259">
    <property type="component" value="Chromosome"/>
</dbReference>
<dbReference type="GO" id="GO:0005737">
    <property type="term" value="C:cytoplasm"/>
    <property type="evidence" value="ECO:0007669"/>
    <property type="project" value="UniProtKB-SubCell"/>
</dbReference>
<dbReference type="GO" id="GO:0004519">
    <property type="term" value="F:endonuclease activity"/>
    <property type="evidence" value="ECO:0007669"/>
    <property type="project" value="UniProtKB-UniRule"/>
</dbReference>
<dbReference type="GO" id="GO:0000287">
    <property type="term" value="F:magnesium ion binding"/>
    <property type="evidence" value="ECO:0007669"/>
    <property type="project" value="UniProtKB-UniRule"/>
</dbReference>
<dbReference type="GO" id="GO:0003676">
    <property type="term" value="F:nucleic acid binding"/>
    <property type="evidence" value="ECO:0007669"/>
    <property type="project" value="InterPro"/>
</dbReference>
<dbReference type="GO" id="GO:0007059">
    <property type="term" value="P:chromosome segregation"/>
    <property type="evidence" value="ECO:0007669"/>
    <property type="project" value="UniProtKB-UniRule"/>
</dbReference>
<dbReference type="GO" id="GO:0006310">
    <property type="term" value="P:DNA recombination"/>
    <property type="evidence" value="ECO:0007669"/>
    <property type="project" value="UniProtKB-UniRule"/>
</dbReference>
<dbReference type="GO" id="GO:0006281">
    <property type="term" value="P:DNA repair"/>
    <property type="evidence" value="ECO:0007669"/>
    <property type="project" value="UniProtKB-UniRule"/>
</dbReference>
<dbReference type="CDD" id="cd22354">
    <property type="entry name" value="RecU-like"/>
    <property type="match status" value="1"/>
</dbReference>
<dbReference type="Gene3D" id="3.40.1350.10">
    <property type="match status" value="1"/>
</dbReference>
<dbReference type="HAMAP" id="MF_00130">
    <property type="entry name" value="RecU"/>
    <property type="match status" value="1"/>
</dbReference>
<dbReference type="InterPro" id="IPR004612">
    <property type="entry name" value="Resolv_RecU"/>
</dbReference>
<dbReference type="InterPro" id="IPR011335">
    <property type="entry name" value="Restrct_endonuc-II-like"/>
</dbReference>
<dbReference type="InterPro" id="IPR011856">
    <property type="entry name" value="tRNA_endonuc-like_dom_sf"/>
</dbReference>
<dbReference type="NCBIfam" id="NF002584">
    <property type="entry name" value="PRK02234.1-5"/>
    <property type="match status" value="1"/>
</dbReference>
<dbReference type="NCBIfam" id="TIGR00648">
    <property type="entry name" value="recU"/>
    <property type="match status" value="1"/>
</dbReference>
<dbReference type="Pfam" id="PF03838">
    <property type="entry name" value="RecU"/>
    <property type="match status" value="1"/>
</dbReference>
<dbReference type="PIRSF" id="PIRSF037785">
    <property type="entry name" value="RecU"/>
    <property type="match status" value="1"/>
</dbReference>
<dbReference type="SUPFAM" id="SSF52980">
    <property type="entry name" value="Restriction endonuclease-like"/>
    <property type="match status" value="1"/>
</dbReference>
<keyword id="KW-0963">Cytoplasm</keyword>
<keyword id="KW-0227">DNA damage</keyword>
<keyword id="KW-0233">DNA recombination</keyword>
<keyword id="KW-0234">DNA repair</keyword>
<keyword id="KW-0255">Endonuclease</keyword>
<keyword id="KW-0378">Hydrolase</keyword>
<keyword id="KW-0460">Magnesium</keyword>
<keyword id="KW-0479">Metal-binding</keyword>
<keyword id="KW-0540">Nuclease</keyword>
<keyword id="KW-1185">Reference proteome</keyword>
<gene>
    <name evidence="1" type="primary">recU</name>
    <name type="ordered locus">Ldb1013</name>
</gene>
<evidence type="ECO:0000255" key="1">
    <source>
        <dbReference type="HAMAP-Rule" id="MF_00130"/>
    </source>
</evidence>
<protein>
    <recommendedName>
        <fullName evidence="1">Holliday junction resolvase RecU</fullName>
        <ecNumber evidence="1">3.1.21.10</ecNumber>
    </recommendedName>
    <alternativeName>
        <fullName evidence="1">Recombination protein U homolog</fullName>
    </alternativeName>
</protein>
<comment type="function">
    <text evidence="1">Endonuclease that resolves Holliday junction intermediates in genetic recombination. Cleaves mobile four-strand junctions by introducing symmetrical nicks in paired strands. Promotes annealing of linear ssDNA with homologous dsDNA. Required for DNA repair, homologous recombination and chromosome segregation.</text>
</comment>
<comment type="catalytic activity">
    <reaction evidence="1">
        <text>Endonucleolytic cleavage at a junction such as a reciprocal single-stranded crossover between two homologous DNA duplexes (Holliday junction).</text>
        <dbReference type="EC" id="3.1.21.10"/>
    </reaction>
</comment>
<comment type="cofactor">
    <cofactor evidence="1">
        <name>Mg(2+)</name>
        <dbReference type="ChEBI" id="CHEBI:18420"/>
    </cofactor>
    <text evidence="1">Binds 1 Mg(2+) ion per subunit.</text>
</comment>
<comment type="subcellular location">
    <subcellularLocation>
        <location evidence="1">Cytoplasm</location>
    </subcellularLocation>
</comment>
<comment type="similarity">
    <text evidence="1">Belongs to the RecU family.</text>
</comment>
<proteinExistence type="inferred from homology"/>
<sequence>MVKYPTGSVMPLRAAQRQGKKALLKKASFSDRGMTLEQQINESNQYYLDAGIAVVHKKPTPIQIVKVDYPKRSRAVIREAYFRQASTTDYNGVYQGYYLDFEAKETRNKTSFPLKNFHEHQILHLEQCLDQEGICFALIGFMTLERYFVTPASFLIQAWQNWKAAGKSSMTLAEIEANSFEIKSGFCPALPYLEAVDRIIADRKQEHGNK</sequence>
<reference key="1">
    <citation type="journal article" date="2006" name="Proc. Natl. Acad. Sci. U.S.A.">
        <title>The complete genome sequence of Lactobacillus bulgaricus reveals extensive and ongoing reductive evolution.</title>
        <authorList>
            <person name="van de Guchte M."/>
            <person name="Penaud S."/>
            <person name="Grimaldi C."/>
            <person name="Barbe V."/>
            <person name="Bryson K."/>
            <person name="Nicolas P."/>
            <person name="Robert C."/>
            <person name="Oztas S."/>
            <person name="Mangenot S."/>
            <person name="Couloux A."/>
            <person name="Loux V."/>
            <person name="Dervyn R."/>
            <person name="Bossy R."/>
            <person name="Bolotin A."/>
            <person name="Batto J.-M."/>
            <person name="Walunas T."/>
            <person name="Gibrat J.-F."/>
            <person name="Bessieres P."/>
            <person name="Weissenbach J."/>
            <person name="Ehrlich S.D."/>
            <person name="Maguin E."/>
        </authorList>
    </citation>
    <scope>NUCLEOTIDE SEQUENCE [LARGE SCALE GENOMIC DNA]</scope>
    <source>
        <strain>ATCC 11842 / DSM 20081 / BCRC 10696 / JCM 1002 / NBRC 13953 / NCIMB 11778 / NCTC 12712 / WDCM 00102 / Lb 14</strain>
    </source>
</reference>
<organism>
    <name type="scientific">Lactobacillus delbrueckii subsp. bulgaricus (strain ATCC 11842 / DSM 20081 / BCRC 10696 / JCM 1002 / NBRC 13953 / NCIMB 11778 / NCTC 12712 / WDCM 00102 / Lb 14)</name>
    <dbReference type="NCBI Taxonomy" id="390333"/>
    <lineage>
        <taxon>Bacteria</taxon>
        <taxon>Bacillati</taxon>
        <taxon>Bacillota</taxon>
        <taxon>Bacilli</taxon>
        <taxon>Lactobacillales</taxon>
        <taxon>Lactobacillaceae</taxon>
        <taxon>Lactobacillus</taxon>
    </lineage>
</organism>
<accession>Q1GA99</accession>